<proteinExistence type="inferred from homology"/>
<name>QUEC_BRUAB</name>
<gene>
    <name evidence="1" type="primary">queC</name>
    <name type="ordered locus">BruAb1_1948</name>
</gene>
<accession>Q57AT2</accession>
<feature type="chain" id="PRO_0000246813" description="7-cyano-7-deazaguanine synthase">
    <location>
        <begin position="1"/>
        <end position="232"/>
    </location>
</feature>
<feature type="binding site" evidence="1">
    <location>
        <begin position="7"/>
        <end position="17"/>
    </location>
    <ligand>
        <name>ATP</name>
        <dbReference type="ChEBI" id="CHEBI:30616"/>
    </ligand>
</feature>
<feature type="binding site" evidence="1">
    <location>
        <position position="185"/>
    </location>
    <ligand>
        <name>Zn(2+)</name>
        <dbReference type="ChEBI" id="CHEBI:29105"/>
    </ligand>
</feature>
<feature type="binding site" evidence="1">
    <location>
        <position position="193"/>
    </location>
    <ligand>
        <name>Zn(2+)</name>
        <dbReference type="ChEBI" id="CHEBI:29105"/>
    </ligand>
</feature>
<feature type="binding site" evidence="1">
    <location>
        <position position="196"/>
    </location>
    <ligand>
        <name>Zn(2+)</name>
        <dbReference type="ChEBI" id="CHEBI:29105"/>
    </ligand>
</feature>
<feature type="binding site" evidence="1">
    <location>
        <position position="199"/>
    </location>
    <ligand>
        <name>Zn(2+)</name>
        <dbReference type="ChEBI" id="CHEBI:29105"/>
    </ligand>
</feature>
<evidence type="ECO:0000255" key="1">
    <source>
        <dbReference type="HAMAP-Rule" id="MF_01633"/>
    </source>
</evidence>
<reference key="1">
    <citation type="journal article" date="2005" name="J. Bacteriol.">
        <title>Completion of the genome sequence of Brucella abortus and comparison to the highly similar genomes of Brucella melitensis and Brucella suis.</title>
        <authorList>
            <person name="Halling S.M."/>
            <person name="Peterson-Burch B.D."/>
            <person name="Bricker B.J."/>
            <person name="Zuerner R.L."/>
            <person name="Qing Z."/>
            <person name="Li L.-L."/>
            <person name="Kapur V."/>
            <person name="Alt D.P."/>
            <person name="Olsen S.C."/>
        </authorList>
    </citation>
    <scope>NUCLEOTIDE SEQUENCE [LARGE SCALE GENOMIC DNA]</scope>
    <source>
        <strain>9-941</strain>
    </source>
</reference>
<sequence length="232" mass="25256">MKTLVICSGGLDSVSLAHKMAAEHELTGLLSFDYGQRHKKELDFAQACAKRLGVPHQIIDIRTIGASLTGSALTDDVDVPDGHYAEETMKVTVVPNRNAIMLAIAFGVAAAQKADAVALAVHGGDHFIYPDCRPGFIEAFQTMQKHALDGYADVKLLAPYVHATKADIVADGAKYRTPFEATWSCYKGADRHCGRCGTCVERREAFHLAGIDDPTSYEDADFWRATTQKRNA</sequence>
<organism>
    <name type="scientific">Brucella abortus biovar 1 (strain 9-941)</name>
    <dbReference type="NCBI Taxonomy" id="262698"/>
    <lineage>
        <taxon>Bacteria</taxon>
        <taxon>Pseudomonadati</taxon>
        <taxon>Pseudomonadota</taxon>
        <taxon>Alphaproteobacteria</taxon>
        <taxon>Hyphomicrobiales</taxon>
        <taxon>Brucellaceae</taxon>
        <taxon>Brucella/Ochrobactrum group</taxon>
        <taxon>Brucella</taxon>
    </lineage>
</organism>
<dbReference type="EC" id="6.3.4.20" evidence="1"/>
<dbReference type="EMBL" id="AE017223">
    <property type="protein sequence ID" value="AAX75252.1"/>
    <property type="molecule type" value="Genomic_DNA"/>
</dbReference>
<dbReference type="RefSeq" id="WP_002965038.1">
    <property type="nucleotide sequence ID" value="NC_006932.1"/>
</dbReference>
<dbReference type="SMR" id="Q57AT2"/>
<dbReference type="EnsemblBacteria" id="AAX75252">
    <property type="protein sequence ID" value="AAX75252"/>
    <property type="gene ID" value="BruAb1_1948"/>
</dbReference>
<dbReference type="GeneID" id="97534751"/>
<dbReference type="KEGG" id="bmb:BruAb1_1948"/>
<dbReference type="HOGENOM" id="CLU_081854_1_0_5"/>
<dbReference type="UniPathway" id="UPA00391"/>
<dbReference type="Proteomes" id="UP000000540">
    <property type="component" value="Chromosome I"/>
</dbReference>
<dbReference type="GO" id="GO:0005524">
    <property type="term" value="F:ATP binding"/>
    <property type="evidence" value="ECO:0007669"/>
    <property type="project" value="UniProtKB-UniRule"/>
</dbReference>
<dbReference type="GO" id="GO:0016879">
    <property type="term" value="F:ligase activity, forming carbon-nitrogen bonds"/>
    <property type="evidence" value="ECO:0007669"/>
    <property type="project" value="UniProtKB-UniRule"/>
</dbReference>
<dbReference type="GO" id="GO:0008270">
    <property type="term" value="F:zinc ion binding"/>
    <property type="evidence" value="ECO:0007669"/>
    <property type="project" value="UniProtKB-UniRule"/>
</dbReference>
<dbReference type="GO" id="GO:0008616">
    <property type="term" value="P:queuosine biosynthetic process"/>
    <property type="evidence" value="ECO:0007669"/>
    <property type="project" value="UniProtKB-UniRule"/>
</dbReference>
<dbReference type="CDD" id="cd01995">
    <property type="entry name" value="QueC-like"/>
    <property type="match status" value="1"/>
</dbReference>
<dbReference type="Gene3D" id="3.40.50.620">
    <property type="entry name" value="HUPs"/>
    <property type="match status" value="1"/>
</dbReference>
<dbReference type="HAMAP" id="MF_01633">
    <property type="entry name" value="QueC"/>
    <property type="match status" value="1"/>
</dbReference>
<dbReference type="InterPro" id="IPR018317">
    <property type="entry name" value="QueC"/>
</dbReference>
<dbReference type="InterPro" id="IPR014729">
    <property type="entry name" value="Rossmann-like_a/b/a_fold"/>
</dbReference>
<dbReference type="NCBIfam" id="TIGR00364">
    <property type="entry name" value="7-cyano-7-deazaguanine synthase QueC"/>
    <property type="match status" value="1"/>
</dbReference>
<dbReference type="PANTHER" id="PTHR42914">
    <property type="entry name" value="7-CYANO-7-DEAZAGUANINE SYNTHASE"/>
    <property type="match status" value="1"/>
</dbReference>
<dbReference type="PANTHER" id="PTHR42914:SF1">
    <property type="entry name" value="7-CYANO-7-DEAZAGUANINE SYNTHASE"/>
    <property type="match status" value="1"/>
</dbReference>
<dbReference type="Pfam" id="PF06508">
    <property type="entry name" value="QueC"/>
    <property type="match status" value="1"/>
</dbReference>
<dbReference type="PIRSF" id="PIRSF006293">
    <property type="entry name" value="ExsB"/>
    <property type="match status" value="1"/>
</dbReference>
<dbReference type="SUPFAM" id="SSF52402">
    <property type="entry name" value="Adenine nucleotide alpha hydrolases-like"/>
    <property type="match status" value="1"/>
</dbReference>
<protein>
    <recommendedName>
        <fullName evidence="1">7-cyano-7-deazaguanine synthase</fullName>
        <ecNumber evidence="1">6.3.4.20</ecNumber>
    </recommendedName>
    <alternativeName>
        <fullName evidence="1">7-cyano-7-carbaguanine synthase</fullName>
    </alternativeName>
    <alternativeName>
        <fullName evidence="1">PreQ(0) synthase</fullName>
    </alternativeName>
    <alternativeName>
        <fullName evidence="1">Queuosine biosynthesis protein QueC</fullName>
    </alternativeName>
</protein>
<keyword id="KW-0067">ATP-binding</keyword>
<keyword id="KW-0436">Ligase</keyword>
<keyword id="KW-0479">Metal-binding</keyword>
<keyword id="KW-0547">Nucleotide-binding</keyword>
<keyword id="KW-0671">Queuosine biosynthesis</keyword>
<keyword id="KW-0862">Zinc</keyword>
<comment type="function">
    <text evidence="1">Catalyzes the ATP-dependent conversion of 7-carboxy-7-deazaguanine (CDG) to 7-cyano-7-deazaguanine (preQ(0)).</text>
</comment>
<comment type="catalytic activity">
    <reaction evidence="1">
        <text>7-carboxy-7-deazaguanine + NH4(+) + ATP = 7-cyano-7-deazaguanine + ADP + phosphate + H2O + H(+)</text>
        <dbReference type="Rhea" id="RHEA:27982"/>
        <dbReference type="ChEBI" id="CHEBI:15377"/>
        <dbReference type="ChEBI" id="CHEBI:15378"/>
        <dbReference type="ChEBI" id="CHEBI:28938"/>
        <dbReference type="ChEBI" id="CHEBI:30616"/>
        <dbReference type="ChEBI" id="CHEBI:43474"/>
        <dbReference type="ChEBI" id="CHEBI:45075"/>
        <dbReference type="ChEBI" id="CHEBI:61036"/>
        <dbReference type="ChEBI" id="CHEBI:456216"/>
        <dbReference type="EC" id="6.3.4.20"/>
    </reaction>
</comment>
<comment type="cofactor">
    <cofactor evidence="1">
        <name>Zn(2+)</name>
        <dbReference type="ChEBI" id="CHEBI:29105"/>
    </cofactor>
    <text evidence="1">Binds 1 zinc ion per subunit.</text>
</comment>
<comment type="pathway">
    <text evidence="1">Purine metabolism; 7-cyano-7-deazaguanine biosynthesis.</text>
</comment>
<comment type="similarity">
    <text evidence="1">Belongs to the QueC family.</text>
</comment>